<sequence length="193" mass="21709">MSFLWDWFNGVLNMLGLANKKGKLVFLGLDNAGKTTLLHMLKDDRIAQHVPTLHPTSEQMSLGGISFTTYDLGGHAQARRVWKDYFPAVDAVVFLIDVADAERMQESRVELESLLQDEQIASVPVLILGNKIDKPGALSEDQLKWQLNIQHMCTGKGDVSRNEMASRPMEVFMCSVLQRQGYGEGIRWLGQYL</sequence>
<name>SAR1_CAEEL</name>
<keyword id="KW-0963">Cytoplasm</keyword>
<keyword id="KW-0256">Endoplasmic reticulum</keyword>
<keyword id="KW-0931">ER-Golgi transport</keyword>
<keyword id="KW-0333">Golgi apparatus</keyword>
<keyword id="KW-0342">GTP-binding</keyword>
<keyword id="KW-0378">Hydrolase</keyword>
<keyword id="KW-0460">Magnesium</keyword>
<keyword id="KW-0472">Membrane</keyword>
<keyword id="KW-0479">Metal-binding</keyword>
<keyword id="KW-0547">Nucleotide-binding</keyword>
<keyword id="KW-0653">Protein transport</keyword>
<keyword id="KW-1185">Reference proteome</keyword>
<keyword id="KW-0813">Transport</keyword>
<dbReference type="EC" id="3.6.5.2" evidence="1"/>
<dbReference type="EMBL" id="BX284604">
    <property type="protein sequence ID" value="CCD73074.1"/>
    <property type="molecule type" value="Genomic_DNA"/>
</dbReference>
<dbReference type="PIR" id="T29706">
    <property type="entry name" value="T29706"/>
</dbReference>
<dbReference type="RefSeq" id="NP_500582.1">
    <property type="nucleotide sequence ID" value="NM_068181.6"/>
</dbReference>
<dbReference type="SMR" id="Q23445"/>
<dbReference type="BioGRID" id="42347">
    <property type="interactions" value="17"/>
</dbReference>
<dbReference type="DIP" id="DIP-25417N"/>
<dbReference type="FunCoup" id="Q23445">
    <property type="interactions" value="2973"/>
</dbReference>
<dbReference type="STRING" id="6239.ZK180.4.1"/>
<dbReference type="PaxDb" id="6239-ZK180.4"/>
<dbReference type="PeptideAtlas" id="Q23445"/>
<dbReference type="EnsemblMetazoa" id="ZK180.4.1">
    <property type="protein sequence ID" value="ZK180.4.1"/>
    <property type="gene ID" value="WBGene00022678"/>
</dbReference>
<dbReference type="GeneID" id="177217"/>
<dbReference type="KEGG" id="cel:CELE_ZK180.4"/>
<dbReference type="UCSC" id="ZK180.4">
    <property type="organism name" value="c. elegans"/>
</dbReference>
<dbReference type="AGR" id="WB:WBGene00022678"/>
<dbReference type="CTD" id="177217"/>
<dbReference type="WormBase" id="ZK180.4">
    <property type="protein sequence ID" value="CE07622"/>
    <property type="gene ID" value="WBGene00022678"/>
    <property type="gene designation" value="sar-1"/>
</dbReference>
<dbReference type="eggNOG" id="KOG0077">
    <property type="taxonomic scope" value="Eukaryota"/>
</dbReference>
<dbReference type="GeneTree" id="ENSGT00940000171772"/>
<dbReference type="HOGENOM" id="CLU_040729_6_0_1"/>
<dbReference type="InParanoid" id="Q23445"/>
<dbReference type="OMA" id="GLWNKHG"/>
<dbReference type="OrthoDB" id="15478at2759"/>
<dbReference type="PhylomeDB" id="Q23445"/>
<dbReference type="Reactome" id="R-CEL-204005">
    <property type="pathway name" value="COPII-mediated vesicle transport"/>
</dbReference>
<dbReference type="Reactome" id="R-CEL-5694530">
    <property type="pathway name" value="Cargo concentration in the ER"/>
</dbReference>
<dbReference type="Reactome" id="R-CEL-983170">
    <property type="pathway name" value="Antigen Presentation: Folding, assembly and peptide loading of class I MHC"/>
</dbReference>
<dbReference type="PRO" id="PR:Q23445"/>
<dbReference type="Proteomes" id="UP000001940">
    <property type="component" value="Chromosome IV"/>
</dbReference>
<dbReference type="Bgee" id="WBGene00022678">
    <property type="expression patterns" value="Expressed in pharyngeal muscle cell (C elegans) and 4 other cell types or tissues"/>
</dbReference>
<dbReference type="GO" id="GO:0030127">
    <property type="term" value="C:COPII vesicle coat"/>
    <property type="evidence" value="ECO:0000318"/>
    <property type="project" value="GO_Central"/>
</dbReference>
<dbReference type="GO" id="GO:0005829">
    <property type="term" value="C:cytosol"/>
    <property type="evidence" value="ECO:0007669"/>
    <property type="project" value="UniProtKB-SubCell"/>
</dbReference>
<dbReference type="GO" id="GO:0070971">
    <property type="term" value="C:endoplasmic reticulum exit site"/>
    <property type="evidence" value="ECO:0000318"/>
    <property type="project" value="GO_Central"/>
</dbReference>
<dbReference type="GO" id="GO:0005789">
    <property type="term" value="C:endoplasmic reticulum membrane"/>
    <property type="evidence" value="ECO:0007669"/>
    <property type="project" value="UniProtKB-SubCell"/>
</dbReference>
<dbReference type="GO" id="GO:0032580">
    <property type="term" value="C:Golgi cisterna membrane"/>
    <property type="evidence" value="ECO:0007669"/>
    <property type="project" value="UniProtKB-SubCell"/>
</dbReference>
<dbReference type="GO" id="GO:0005525">
    <property type="term" value="F:GTP binding"/>
    <property type="evidence" value="ECO:0007669"/>
    <property type="project" value="UniProtKB-KW"/>
</dbReference>
<dbReference type="GO" id="GO:0003924">
    <property type="term" value="F:GTPase activity"/>
    <property type="evidence" value="ECO:0000318"/>
    <property type="project" value="GO_Central"/>
</dbReference>
<dbReference type="GO" id="GO:0046872">
    <property type="term" value="F:metal ion binding"/>
    <property type="evidence" value="ECO:0007669"/>
    <property type="project" value="UniProtKB-KW"/>
</dbReference>
<dbReference type="GO" id="GO:0009792">
    <property type="term" value="P:embryo development ending in birth or egg hatching"/>
    <property type="evidence" value="ECO:0000315"/>
    <property type="project" value="WormBase"/>
</dbReference>
<dbReference type="GO" id="GO:0006888">
    <property type="term" value="P:endoplasmic reticulum to Golgi vesicle-mediated transport"/>
    <property type="evidence" value="ECO:0000318"/>
    <property type="project" value="GO_Central"/>
</dbReference>
<dbReference type="GO" id="GO:0006886">
    <property type="term" value="P:intracellular protein transport"/>
    <property type="evidence" value="ECO:0007669"/>
    <property type="project" value="InterPro"/>
</dbReference>
<dbReference type="GO" id="GO:0061024">
    <property type="term" value="P:membrane organization"/>
    <property type="evidence" value="ECO:0000318"/>
    <property type="project" value="GO_Central"/>
</dbReference>
<dbReference type="GO" id="GO:0003400">
    <property type="term" value="P:regulation of COPII vesicle coating"/>
    <property type="evidence" value="ECO:0000318"/>
    <property type="project" value="GO_Central"/>
</dbReference>
<dbReference type="GO" id="GO:0016050">
    <property type="term" value="P:vesicle organization"/>
    <property type="evidence" value="ECO:0000318"/>
    <property type="project" value="GO_Central"/>
</dbReference>
<dbReference type="CDD" id="cd00879">
    <property type="entry name" value="Sar1"/>
    <property type="match status" value="1"/>
</dbReference>
<dbReference type="FunFam" id="3.40.50.300:FF:000161">
    <property type="entry name" value="Small COPII coat GTPase"/>
    <property type="match status" value="1"/>
</dbReference>
<dbReference type="Gene3D" id="3.40.50.300">
    <property type="entry name" value="P-loop containing nucleotide triphosphate hydrolases"/>
    <property type="match status" value="1"/>
</dbReference>
<dbReference type="InterPro" id="IPR027417">
    <property type="entry name" value="P-loop_NTPase"/>
</dbReference>
<dbReference type="InterPro" id="IPR005225">
    <property type="entry name" value="Small_GTP-bd"/>
</dbReference>
<dbReference type="InterPro" id="IPR006689">
    <property type="entry name" value="Small_GTPase_ARF/SAR"/>
</dbReference>
<dbReference type="InterPro" id="IPR006687">
    <property type="entry name" value="Small_GTPase_SAR1"/>
</dbReference>
<dbReference type="NCBIfam" id="TIGR00231">
    <property type="entry name" value="small_GTP"/>
    <property type="match status" value="1"/>
</dbReference>
<dbReference type="PANTHER" id="PTHR45684">
    <property type="entry name" value="RE74312P"/>
    <property type="match status" value="1"/>
</dbReference>
<dbReference type="Pfam" id="PF00025">
    <property type="entry name" value="Arf"/>
    <property type="match status" value="1"/>
</dbReference>
<dbReference type="PRINTS" id="PR00328">
    <property type="entry name" value="SAR1GTPBP"/>
</dbReference>
<dbReference type="SMART" id="SM00177">
    <property type="entry name" value="ARF"/>
    <property type="match status" value="1"/>
</dbReference>
<dbReference type="SMART" id="SM00178">
    <property type="entry name" value="SAR"/>
    <property type="match status" value="1"/>
</dbReference>
<dbReference type="SUPFAM" id="SSF52540">
    <property type="entry name" value="P-loop containing nucleoside triphosphate hydrolases"/>
    <property type="match status" value="1"/>
</dbReference>
<dbReference type="PROSITE" id="PS51422">
    <property type="entry name" value="SAR1"/>
    <property type="match status" value="1"/>
</dbReference>
<accession>Q23445</accession>
<feature type="chain" id="PRO_0000206263" description="Small COPII coat GTPase SAR1">
    <location>
        <begin position="1"/>
        <end position="193"/>
    </location>
</feature>
<feature type="region of interest" description="Mediates recruitment to ER membranes" evidence="2">
    <location>
        <begin position="11"/>
        <end position="15"/>
    </location>
</feature>
<feature type="short sequence motif" description="STAR; SAR1-N-terminal activation recruitment. Required for the activation and subsequent recruitment to ER membrane" evidence="2">
    <location>
        <begin position="3"/>
        <end position="5"/>
    </location>
</feature>
<feature type="binding site" evidence="1">
    <location>
        <position position="30"/>
    </location>
    <ligand>
        <name>Mg(2+)</name>
        <dbReference type="ChEBI" id="CHEBI:18420"/>
    </ligand>
</feature>
<feature type="binding site" evidence="1">
    <location>
        <position position="31"/>
    </location>
    <ligand>
        <name>GDP</name>
        <dbReference type="ChEBI" id="CHEBI:58189"/>
    </ligand>
</feature>
<feature type="binding site" evidence="3">
    <location>
        <position position="31"/>
    </location>
    <ligand>
        <name>GTP</name>
        <dbReference type="ChEBI" id="CHEBI:37565"/>
    </ligand>
</feature>
<feature type="binding site" evidence="1">
    <location>
        <position position="32"/>
    </location>
    <ligand>
        <name>GDP</name>
        <dbReference type="ChEBI" id="CHEBI:58189"/>
    </ligand>
</feature>
<feature type="binding site" evidence="1">
    <location>
        <position position="33"/>
    </location>
    <ligand>
        <name>GDP</name>
        <dbReference type="ChEBI" id="CHEBI:58189"/>
    </ligand>
</feature>
<feature type="binding site" evidence="3">
    <location>
        <position position="33"/>
    </location>
    <ligand>
        <name>GTP</name>
        <dbReference type="ChEBI" id="CHEBI:37565"/>
    </ligand>
</feature>
<feature type="binding site" evidence="1">
    <location>
        <position position="34"/>
    </location>
    <ligand>
        <name>GDP</name>
        <dbReference type="ChEBI" id="CHEBI:58189"/>
    </ligand>
</feature>
<feature type="binding site" evidence="3">
    <location>
        <position position="34"/>
    </location>
    <ligand>
        <name>GTP</name>
        <dbReference type="ChEBI" id="CHEBI:37565"/>
    </ligand>
</feature>
<feature type="binding site" evidence="1">
    <location>
        <position position="35"/>
    </location>
    <ligand>
        <name>GDP</name>
        <dbReference type="ChEBI" id="CHEBI:58189"/>
    </ligand>
</feature>
<feature type="binding site" evidence="3">
    <location>
        <position position="35"/>
    </location>
    <ligand>
        <name>GTP</name>
        <dbReference type="ChEBI" id="CHEBI:37565"/>
    </ligand>
</feature>
<feature type="binding site" evidence="1">
    <location>
        <position position="36"/>
    </location>
    <ligand>
        <name>GDP</name>
        <dbReference type="ChEBI" id="CHEBI:58189"/>
    </ligand>
</feature>
<feature type="binding site" evidence="3">
    <location>
        <position position="36"/>
    </location>
    <ligand>
        <name>GTP</name>
        <dbReference type="ChEBI" id="CHEBI:37565"/>
    </ligand>
</feature>
<feature type="binding site" evidence="1">
    <location>
        <position position="71"/>
    </location>
    <ligand>
        <name>Mg(2+)</name>
        <dbReference type="ChEBI" id="CHEBI:18420"/>
    </ligand>
</feature>
<feature type="binding site" evidence="1">
    <location>
        <position position="130"/>
    </location>
    <ligand>
        <name>GDP</name>
        <dbReference type="ChEBI" id="CHEBI:58189"/>
    </ligand>
</feature>
<feature type="binding site" evidence="3">
    <location>
        <position position="130"/>
    </location>
    <ligand>
        <name>GTP</name>
        <dbReference type="ChEBI" id="CHEBI:37565"/>
    </ligand>
</feature>
<feature type="binding site" evidence="1">
    <location>
        <position position="131"/>
    </location>
    <ligand>
        <name>GDP</name>
        <dbReference type="ChEBI" id="CHEBI:58189"/>
    </ligand>
</feature>
<feature type="binding site" evidence="3">
    <location>
        <position position="131"/>
    </location>
    <ligand>
        <name>GTP</name>
        <dbReference type="ChEBI" id="CHEBI:37565"/>
    </ligand>
</feature>
<feature type="binding site" evidence="1">
    <location>
        <position position="133"/>
    </location>
    <ligand>
        <name>GDP</name>
        <dbReference type="ChEBI" id="CHEBI:58189"/>
    </ligand>
</feature>
<feature type="binding site" evidence="3">
    <location>
        <position position="133"/>
    </location>
    <ligand>
        <name>GTP</name>
        <dbReference type="ChEBI" id="CHEBI:37565"/>
    </ligand>
</feature>
<feature type="binding site" evidence="1">
    <location>
        <position position="176"/>
    </location>
    <ligand>
        <name>GDP</name>
        <dbReference type="ChEBI" id="CHEBI:58189"/>
    </ligand>
</feature>
<feature type="binding site" evidence="3">
    <location>
        <position position="176"/>
    </location>
    <ligand>
        <name>GTP</name>
        <dbReference type="ChEBI" id="CHEBI:37565"/>
    </ligand>
</feature>
<feature type="binding site" evidence="1">
    <location>
        <position position="177"/>
    </location>
    <ligand>
        <name>GDP</name>
        <dbReference type="ChEBI" id="CHEBI:58189"/>
    </ligand>
</feature>
<feature type="binding site" evidence="3">
    <location>
        <position position="177"/>
    </location>
    <ligand>
        <name>GTP</name>
        <dbReference type="ChEBI" id="CHEBI:37565"/>
    </ligand>
</feature>
<evidence type="ECO:0000250" key="1">
    <source>
        <dbReference type="UniProtKB" id="Q9NR31"/>
    </source>
</evidence>
<evidence type="ECO:0000250" key="2">
    <source>
        <dbReference type="UniProtKB" id="Q9QVY3"/>
    </source>
</evidence>
<evidence type="ECO:0000250" key="3">
    <source>
        <dbReference type="UniProtKB" id="Q9Y6B6"/>
    </source>
</evidence>
<evidence type="ECO:0000269" key="4">
    <source>
    </source>
</evidence>
<evidence type="ECO:0000305" key="5"/>
<evidence type="ECO:0000312" key="6">
    <source>
        <dbReference type="WormBase" id="ZK180.4"/>
    </source>
</evidence>
<proteinExistence type="inferred from homology"/>
<organism>
    <name type="scientific">Caenorhabditis elegans</name>
    <dbReference type="NCBI Taxonomy" id="6239"/>
    <lineage>
        <taxon>Eukaryota</taxon>
        <taxon>Metazoa</taxon>
        <taxon>Ecdysozoa</taxon>
        <taxon>Nematoda</taxon>
        <taxon>Chromadorea</taxon>
        <taxon>Rhabditida</taxon>
        <taxon>Rhabditina</taxon>
        <taxon>Rhabditomorpha</taxon>
        <taxon>Rhabditoidea</taxon>
        <taxon>Rhabditidae</taxon>
        <taxon>Peloderinae</taxon>
        <taxon>Caenorhabditis</taxon>
    </lineage>
</organism>
<protein>
    <recommendedName>
        <fullName evidence="1">Small COPII coat GTPase SAR1</fullName>
        <ecNumber evidence="1">3.6.5.2</ecNumber>
    </recommendedName>
</protein>
<reference key="1">
    <citation type="journal article" date="1998" name="Science">
        <title>Genome sequence of the nematode C. elegans: a platform for investigating biology.</title>
        <authorList>
            <consortium name="The C. elegans sequencing consortium"/>
        </authorList>
    </citation>
    <scope>NUCLEOTIDE SEQUENCE [LARGE SCALE GENOMIC DNA]</scope>
    <source>
        <strain>Bristol N2</strain>
    </source>
</reference>
<reference key="2">
    <citation type="journal article" date="2020" name="Elife">
        <title>The CHORD protein CHP-1 regulates EGF receptor trafficking and signaling in C. elegans and in human cells.</title>
        <authorList>
            <person name="Haag A."/>
            <person name="Walser M."/>
            <person name="Henggeler A."/>
            <person name="Hajnal A."/>
        </authorList>
    </citation>
    <scope>FUNCTION</scope>
    <scope>DISRUPTION PHENOTYPE</scope>
</reference>
<gene>
    <name evidence="6" type="primary">sar-1</name>
    <name evidence="6" type="ORF">ZK180.4</name>
</gene>
<comment type="function">
    <text evidence="1 4">Small GTPase that cycles between an active GTP-bound and an inactive GDP-bound state and mainly functions in vesicle-mediated endoplasmic reticulum (ER) to Golgi transport. The active GTP-bound form inserts into the endoplasmic reticulum membrane where it recruits the remainder of the coat protein complex II/COPII. The coat protein complex II assembling and polymerizing on endoplasmic reticulum membrane is responsible for both the sorting of cargos and the deformation and budding of membranes into vesicles destined to the Golgi (By similarity). Plays a role in transporting the tyrosine kinase receptor let-23 from the endoplasmic reticulum to the plasma membrane of vulval precursor cells (PubMed:32053105).</text>
</comment>
<comment type="catalytic activity">
    <reaction evidence="1">
        <text>GTP + H2O = GDP + phosphate + H(+)</text>
        <dbReference type="Rhea" id="RHEA:19669"/>
        <dbReference type="ChEBI" id="CHEBI:15377"/>
        <dbReference type="ChEBI" id="CHEBI:15378"/>
        <dbReference type="ChEBI" id="CHEBI:37565"/>
        <dbReference type="ChEBI" id="CHEBI:43474"/>
        <dbReference type="ChEBI" id="CHEBI:58189"/>
        <dbReference type="EC" id="3.6.5.2"/>
    </reaction>
    <physiologicalReaction direction="left-to-right" evidence="1">
        <dbReference type="Rhea" id="RHEA:19670"/>
    </physiologicalReaction>
</comment>
<comment type="activity regulation">
    <text evidence="1">Small GTPases activation is mediated by guanine exchange factors (GEF), while inactivation through hydrolysis of the bound GTP is stimulated by GTPase activating proteins (GAP).</text>
</comment>
<comment type="subunit">
    <text evidence="1">Homodimer; upon association with membrane. Part of the coat protein complex II/COPII, composed of SEC23/24 and SEC13/31 heterodimers, that it helps recruit and assemble on endoplasmic reticulum (ER) membranes at ER exit sites.</text>
</comment>
<comment type="subcellular location">
    <subcellularLocation>
        <location evidence="1">Endoplasmic reticulum membrane</location>
        <topology evidence="1">Peripheral membrane protein</topology>
    </subcellularLocation>
    <subcellularLocation>
        <location evidence="1">Golgi apparatus</location>
        <location evidence="1">Golgi stack membrane</location>
        <topology evidence="1">Peripheral membrane protein</topology>
    </subcellularLocation>
    <subcellularLocation>
        <location evidence="1">Cytoplasm</location>
        <location evidence="1">Cytosol</location>
    </subcellularLocation>
    <text evidence="1">Active at endoplasmic reticulum exit sites (ERES) where it inserts into the membrane and recruits the remainder of the coat protein complex II/COPII.</text>
</comment>
<comment type="disruption phenotype">
    <text evidence="4">RNAi-mediated knockdown results in the reduced plasma membrane localization and intracellular accumulation of the tyrosine kinase receptor let-23 in vulval precursor cells.</text>
</comment>
<comment type="similarity">
    <text evidence="5">Belongs to the small GTPase superfamily. SAR1 family.</text>
</comment>